<dbReference type="EMBL" id="AF002133">
    <property type="protein sequence ID" value="AAC46198.1"/>
    <property type="molecule type" value="Genomic_DNA"/>
</dbReference>
<dbReference type="InterPro" id="IPR002881">
    <property type="entry name" value="DUF58"/>
</dbReference>
<dbReference type="PANTHER" id="PTHR33608">
    <property type="entry name" value="BLL2464 PROTEIN"/>
    <property type="match status" value="1"/>
</dbReference>
<dbReference type="PANTHER" id="PTHR33608:SF6">
    <property type="entry name" value="BLL2464 PROTEIN"/>
    <property type="match status" value="1"/>
</dbReference>
<dbReference type="Pfam" id="PF01882">
    <property type="entry name" value="DUF58"/>
    <property type="match status" value="1"/>
</dbReference>
<evidence type="ECO:0000305" key="1"/>
<organism>
    <name type="scientific">Mycobacterium avium</name>
    <dbReference type="NCBI Taxonomy" id="1764"/>
    <lineage>
        <taxon>Bacteria</taxon>
        <taxon>Bacillati</taxon>
        <taxon>Actinomycetota</taxon>
        <taxon>Actinomycetes</taxon>
        <taxon>Mycobacteriales</taxon>
        <taxon>Mycobacteriaceae</taxon>
        <taxon>Mycobacterium</taxon>
        <taxon>Mycobacterium avium complex (MAC)</taxon>
    </lineage>
</organism>
<comment type="similarity">
    <text evidence="1">To M.tuberculosis Rv1480.</text>
</comment>
<proteinExistence type="predicted"/>
<sequence>MTRVPARSGRHDEQTLLRTIATTPRAPVGVRGDLATAIDALRRPERRRGMAVIISDFLGPINWQRPLGAIAARHEVLAIEVLDPRDVELPDIGDVVLQDAETGVTREFTIDAQLRDDFAKAAAAHRADVARTIRSCGAPILTLRTDRDWIADIVRFVKSRRRGALAGRQ</sequence>
<accession>O07394</accession>
<feature type="chain" id="PRO_0000103851" description="Uncharacterized protein MAV169">
    <location>
        <begin position="1"/>
        <end position="169"/>
    </location>
</feature>
<reference key="1">
    <citation type="journal article" date="1998" name="Microbiology">
        <title>Determination of a 15437 bp nucleotide sequence around the inhA gene of Mycobacterium avium and similarity analysis of the products of putative ORFs.</title>
        <authorList>
            <person name="Labo M."/>
            <person name="Gusberti L."/>
            <person name="de Rossi E."/>
            <person name="Speziale P."/>
            <person name="Riccardi G."/>
        </authorList>
    </citation>
    <scope>NUCLEOTIDE SEQUENCE [GENOMIC DNA]</scope>
    <source>
        <strain>GIR10</strain>
    </source>
</reference>
<name>YE80_MYCAV</name>
<protein>
    <recommendedName>
        <fullName>Uncharacterized protein MAV169</fullName>
    </recommendedName>
</protein>